<keyword id="KW-0040">ANK repeat</keyword>
<keyword id="KW-0970">Cilium biogenesis/degradation</keyword>
<keyword id="KW-0963">Cytoplasm</keyword>
<keyword id="KW-0903">Direct protein sequencing</keyword>
<keyword id="KW-0333">Golgi apparatus</keyword>
<keyword id="KW-0343">GTPase activation</keyword>
<keyword id="KW-0472">Membrane</keyword>
<keyword id="KW-0479">Metal-binding</keyword>
<keyword id="KW-0597">Phosphoprotein</keyword>
<keyword id="KW-1185">Reference proteome</keyword>
<keyword id="KW-0677">Repeat</keyword>
<keyword id="KW-0728">SH3 domain</keyword>
<keyword id="KW-0862">Zinc</keyword>
<keyword id="KW-0863">Zinc-finger</keyword>
<evidence type="ECO:0000250" key="1"/>
<evidence type="ECO:0000250" key="2">
    <source>
        <dbReference type="UniProtKB" id="Q1AAU6"/>
    </source>
</evidence>
<evidence type="ECO:0000250" key="3">
    <source>
        <dbReference type="UniProtKB" id="Q9QWY8"/>
    </source>
</evidence>
<evidence type="ECO:0000250" key="4">
    <source>
        <dbReference type="UniProtKB" id="Q9ULH1"/>
    </source>
</evidence>
<evidence type="ECO:0000255" key="5">
    <source>
        <dbReference type="PROSITE-ProRule" id="PRU00145"/>
    </source>
</evidence>
<evidence type="ECO:0000255" key="6">
    <source>
        <dbReference type="PROSITE-ProRule" id="PRU00192"/>
    </source>
</evidence>
<evidence type="ECO:0000255" key="7">
    <source>
        <dbReference type="PROSITE-ProRule" id="PRU00288"/>
    </source>
</evidence>
<evidence type="ECO:0000256" key="8">
    <source>
        <dbReference type="SAM" id="MobiDB-lite"/>
    </source>
</evidence>
<evidence type="ECO:0000305" key="9"/>
<sequence length="1129" mass="125382">MRSSASRLSSFSSRDSLWNRMPDQISVSEFIAETTEDYNSPTTSSFTTRLHNCRNTVTLLEEALDQDRTALQKVKKSVKAIYNSGQDHVQNEENYAQVLDKFGSNFLSRDNPDLGTAFVKFSTLTKELSTLLKNLLQGLSHNVIFTLDSLLKGDLKGVKGDLKKPFDKAWKDYETKFTKIEKEKREHAKQHGMIRTEITGAEIAEEMEKERRLFQLQMCEYLIKVNEIKTKKGVDLLQNLIKYYHAQCNFFQDGLKTADKLKQYIEKLAADLYNIKQTQDEEKKQLTALRDLIKSSLQLDQKESRRDSQSRQGGYSMHQLQGNKEYGSEKKGYLLKKSDGIRKVWQRRKCSVKNGILTISHATSNRQPAKLNLLTCQVKPNAEDKKSFDLISHNRTYHFQAEDEQDYVAWISVLTNSKEEALTMAFRGEQSAGESSLEELTKAIIEDVQRLPGNDVCCDCGSAEPTWLSTNLGILTCIECSGIHREMGVHISRIQSLELDKLGTSELLLAKNVGNNSFNDIMEANLPSPSPKPTPSSDMTVRKEYITAKYVDHRFSRKTCSSSSAKLNELLEAIKSRDLLALIQVYAEGVELMEPLLEPGQELGETALHLAVRTADQTSLHLVDFLVQNCGNLDKQTALGNTALHYCSMYSKPECLKLLLRSKPTVDVVNQAGETALDIAKRLKATQCEDLLSQAKSGKFNPHVHVEYEWNLRQEEMDESDDDLDDKPSPIKKERSPRPQSFCHSSSISPQDKLSLPGFSTPRDKQRLSYGAFTNQIFVSTSTDSPTSPIAEAPPLPPRNATKGPPGPPSTLPLSTQTSSGSSTLSKKRSPPPPPGHKRTLSDPPSPLPHGPPNKGAVPWGNDVGPSSSSKTTNKFEGLSQQSSTGSAKTALGPRVLPKLPQKVALRKTETSHHLSLDKANVPPEIFQKSSQLTELPQKPPPGDLPPKPTELAPKPPIGDLPPKPGELPPKPQLGDLPPKPQLADLPPKPQVKDLPPKPQLGELLAKPQTGDASPKAQPPLELTPKSHPADLSPNVPKQASEDTNDLTPTLPETPVPLPRKINTGKSKVRRVKTIYDCQADNDDELTFMEGEVIVVTGEEDQEWWIGHIEGQPERKGVFPVSFVHILSD</sequence>
<protein>
    <recommendedName>
        <fullName>Arf-GAP with SH3 domain, ANK repeat and PH domain-containing protein 1</fullName>
    </recommendedName>
    <alternativeName>
        <fullName>130 kDa phosphatidylinositol 4,5-bisphosphate-dependent ARF1 GTPase-activating protein</fullName>
    </alternativeName>
    <alternativeName>
        <fullName>ADP-ribosylation factor-directed GTPase-activating protein 1</fullName>
        <shortName>ARF GTPase-activating protein 1</shortName>
    </alternativeName>
    <alternativeName>
        <fullName>Development and differentiation-enhancing factor 1</fullName>
        <shortName>DEF-1</shortName>
        <shortName>Differentiation-enhancing factor 1</shortName>
    </alternativeName>
    <alternativeName>
        <fullName>PIP2-dependent ARF1 GAP</fullName>
    </alternativeName>
</protein>
<organism>
    <name type="scientific">Bos taurus</name>
    <name type="common">Bovine</name>
    <dbReference type="NCBI Taxonomy" id="9913"/>
    <lineage>
        <taxon>Eukaryota</taxon>
        <taxon>Metazoa</taxon>
        <taxon>Chordata</taxon>
        <taxon>Craniata</taxon>
        <taxon>Vertebrata</taxon>
        <taxon>Euteleostomi</taxon>
        <taxon>Mammalia</taxon>
        <taxon>Eutheria</taxon>
        <taxon>Laurasiatheria</taxon>
        <taxon>Artiodactyla</taxon>
        <taxon>Ruminantia</taxon>
        <taxon>Pecora</taxon>
        <taxon>Bovidae</taxon>
        <taxon>Bovinae</taxon>
        <taxon>Bos</taxon>
    </lineage>
</organism>
<feature type="chain" id="PRO_0000074195" description="Arf-GAP with SH3 domain, ANK repeat and PH domain-containing protein 1">
    <location>
        <begin position="1"/>
        <end position="1129"/>
    </location>
</feature>
<feature type="domain" description="PH" evidence="5">
    <location>
        <begin position="327"/>
        <end position="419"/>
    </location>
</feature>
<feature type="domain" description="Arf-GAP" evidence="7">
    <location>
        <begin position="442"/>
        <end position="565"/>
    </location>
</feature>
<feature type="repeat" description="ANK 1">
    <location>
        <begin position="603"/>
        <end position="635"/>
    </location>
</feature>
<feature type="repeat" description="ANK 2">
    <location>
        <begin position="639"/>
        <end position="668"/>
    </location>
</feature>
<feature type="domain" description="SH3" evidence="6">
    <location>
        <begin position="1067"/>
        <end position="1129"/>
    </location>
</feature>
<feature type="zinc finger region" description="C4-type" evidence="7">
    <location>
        <begin position="457"/>
        <end position="480"/>
    </location>
</feature>
<feature type="region of interest" description="Disordered" evidence="8">
    <location>
        <begin position="300"/>
        <end position="321"/>
    </location>
</feature>
<feature type="region of interest" description="Disordered" evidence="8">
    <location>
        <begin position="714"/>
        <end position="763"/>
    </location>
</feature>
<feature type="region of interest" description="Disordered" evidence="8">
    <location>
        <begin position="780"/>
        <end position="1063"/>
    </location>
</feature>
<feature type="compositionally biased region" description="Basic and acidic residues" evidence="8">
    <location>
        <begin position="300"/>
        <end position="309"/>
    </location>
</feature>
<feature type="compositionally biased region" description="Polar residues" evidence="8">
    <location>
        <begin position="310"/>
        <end position="321"/>
    </location>
</feature>
<feature type="compositionally biased region" description="Acidic residues" evidence="8">
    <location>
        <begin position="716"/>
        <end position="725"/>
    </location>
</feature>
<feature type="compositionally biased region" description="Basic and acidic residues" evidence="8">
    <location>
        <begin position="726"/>
        <end position="737"/>
    </location>
</feature>
<feature type="compositionally biased region" description="Polar residues" evidence="8">
    <location>
        <begin position="738"/>
        <end position="752"/>
    </location>
</feature>
<feature type="compositionally biased region" description="Low complexity" evidence="8">
    <location>
        <begin position="812"/>
        <end position="825"/>
    </location>
</feature>
<feature type="compositionally biased region" description="Polar residues" evidence="8">
    <location>
        <begin position="865"/>
        <end position="888"/>
    </location>
</feature>
<feature type="compositionally biased region" description="Basic and acidic residues" evidence="8">
    <location>
        <begin position="907"/>
        <end position="917"/>
    </location>
</feature>
<feature type="compositionally biased region" description="Pro residues" evidence="8">
    <location>
        <begin position="938"/>
        <end position="972"/>
    </location>
</feature>
<feature type="modified residue" description="Phosphoserine" evidence="4">
    <location>
        <position position="720"/>
    </location>
</feature>
<feature type="modified residue" description="Phosphoserine" evidence="2">
    <location>
        <position position="729"/>
    </location>
</feature>
<feature type="modified residue" description="Phosphoserine" evidence="4">
    <location>
        <position position="842"/>
    </location>
</feature>
<feature type="modified residue" description="Phosphoserine" evidence="4">
    <location>
        <position position="846"/>
    </location>
</feature>
<feature type="modified residue" description="Phosphoserine" evidence="4">
    <location>
        <position position="1014"/>
    </location>
</feature>
<feature type="modified residue" description="Phosphoserine" evidence="4">
    <location>
        <position position="1033"/>
    </location>
</feature>
<feature type="modified residue" description="Phosphoserine" evidence="4">
    <location>
        <position position="1041"/>
    </location>
</feature>
<feature type="modified residue" description="Phosphothreonine" evidence="3">
    <location>
        <position position="1048"/>
    </location>
</feature>
<feature type="modified residue" description="Phosphoserine" evidence="3">
    <location>
        <position position="1128"/>
    </location>
</feature>
<feature type="sequence conflict" description="In Ref. 2; AA sequence." evidence="9" ref="2">
    <original>D</original>
    <variation>T</variation>
    <location>
        <position position="65"/>
    </location>
</feature>
<gene>
    <name type="primary">ASAP1</name>
    <name type="synonym">DDEF1</name>
</gene>
<dbReference type="EMBL" id="AF112886">
    <property type="protein sequence ID" value="AAD19965.1"/>
    <property type="molecule type" value="mRNA"/>
</dbReference>
<dbReference type="RefSeq" id="NP_787015.1">
    <property type="nucleotide sequence ID" value="NM_175821.2"/>
</dbReference>
<dbReference type="SMR" id="O97902"/>
<dbReference type="FunCoup" id="O97902">
    <property type="interactions" value="2799"/>
</dbReference>
<dbReference type="IntAct" id="O97902">
    <property type="interactions" value="2"/>
</dbReference>
<dbReference type="STRING" id="9913.ENSBTAP00000056666"/>
<dbReference type="PaxDb" id="9913-ENSBTAP00000045295"/>
<dbReference type="GeneID" id="327705"/>
<dbReference type="KEGG" id="bta:327705"/>
<dbReference type="CTD" id="50807"/>
<dbReference type="eggNOG" id="KOG0521">
    <property type="taxonomic scope" value="Eukaryota"/>
</dbReference>
<dbReference type="InParanoid" id="O97902"/>
<dbReference type="OrthoDB" id="435430at2759"/>
<dbReference type="Proteomes" id="UP000009136">
    <property type="component" value="Unplaced"/>
</dbReference>
<dbReference type="GO" id="GO:0000139">
    <property type="term" value="C:Golgi membrane"/>
    <property type="evidence" value="ECO:0000250"/>
    <property type="project" value="UniProtKB"/>
</dbReference>
<dbReference type="GO" id="GO:0002102">
    <property type="term" value="C:podosome"/>
    <property type="evidence" value="ECO:0000318"/>
    <property type="project" value="GO_Central"/>
</dbReference>
<dbReference type="GO" id="GO:0032588">
    <property type="term" value="C:trans-Golgi network membrane"/>
    <property type="evidence" value="ECO:0000250"/>
    <property type="project" value="UniProtKB"/>
</dbReference>
<dbReference type="GO" id="GO:0005096">
    <property type="term" value="F:GTPase activator activity"/>
    <property type="evidence" value="ECO:0000314"/>
    <property type="project" value="GO_Central"/>
</dbReference>
<dbReference type="GO" id="GO:0008270">
    <property type="term" value="F:zinc ion binding"/>
    <property type="evidence" value="ECO:0007669"/>
    <property type="project" value="UniProtKB-KW"/>
</dbReference>
<dbReference type="GO" id="GO:0060271">
    <property type="term" value="P:cilium assembly"/>
    <property type="evidence" value="ECO:0000250"/>
    <property type="project" value="UniProtKB"/>
</dbReference>
<dbReference type="GO" id="GO:1903527">
    <property type="term" value="P:positive regulation of membrane tubulation"/>
    <property type="evidence" value="ECO:0000318"/>
    <property type="project" value="GO_Central"/>
</dbReference>
<dbReference type="GO" id="GO:0061512">
    <property type="term" value="P:protein localization to cilium"/>
    <property type="evidence" value="ECO:0000250"/>
    <property type="project" value="UniProtKB"/>
</dbReference>
<dbReference type="CDD" id="cd08848">
    <property type="entry name" value="ArfGap_ASAP1"/>
    <property type="match status" value="1"/>
</dbReference>
<dbReference type="CDD" id="cd07641">
    <property type="entry name" value="BAR_ASAP1"/>
    <property type="match status" value="1"/>
</dbReference>
<dbReference type="CDD" id="cd13251">
    <property type="entry name" value="PH_ASAP"/>
    <property type="match status" value="1"/>
</dbReference>
<dbReference type="CDD" id="cd11965">
    <property type="entry name" value="SH3_ASAP1"/>
    <property type="match status" value="1"/>
</dbReference>
<dbReference type="FunFam" id="1.20.1270.60:FF:000004">
    <property type="entry name" value="Arf-GAP with SH3 domain, ANK repeat and PH domain-containing protein 1"/>
    <property type="match status" value="1"/>
</dbReference>
<dbReference type="FunFam" id="1.25.40.950:FF:000001">
    <property type="entry name" value="Arf-GAP with SH3 domain, ANK repeat and PH domain-containing protein 1"/>
    <property type="match status" value="1"/>
</dbReference>
<dbReference type="FunFam" id="1.10.220.150:FF:000002">
    <property type="entry name" value="arf-GAP with SH3 domain, ANK repeat and PH domain-containing protein 1"/>
    <property type="match status" value="1"/>
</dbReference>
<dbReference type="FunFam" id="1.25.40.20:FF:000006">
    <property type="entry name" value="Arf-GAP with SH3 domain, ANK repeat and PH domain-containing protein 2"/>
    <property type="match status" value="1"/>
</dbReference>
<dbReference type="FunFam" id="2.30.29.30:FF:000012">
    <property type="entry name" value="Arf-GAP with SH3 domain, ANK repeat and PH domain-containing protein 2"/>
    <property type="match status" value="1"/>
</dbReference>
<dbReference type="FunFam" id="2.30.30.40:FF:000012">
    <property type="entry name" value="Arf-GAP with SH3 domain, ANK repeat and PH domain-containing protein 2"/>
    <property type="match status" value="1"/>
</dbReference>
<dbReference type="Gene3D" id="1.25.40.950">
    <property type="match status" value="1"/>
</dbReference>
<dbReference type="Gene3D" id="1.25.40.20">
    <property type="entry name" value="Ankyrin repeat-containing domain"/>
    <property type="match status" value="1"/>
</dbReference>
<dbReference type="Gene3D" id="1.10.220.150">
    <property type="entry name" value="Arf GTPase activating protein"/>
    <property type="match status" value="1"/>
</dbReference>
<dbReference type="Gene3D" id="1.20.1270.60">
    <property type="entry name" value="Arfaptin homology (AH) domain/BAR domain"/>
    <property type="match status" value="1"/>
</dbReference>
<dbReference type="Gene3D" id="2.30.29.30">
    <property type="entry name" value="Pleckstrin-homology domain (PH domain)/Phosphotyrosine-binding domain (PTB)"/>
    <property type="match status" value="1"/>
</dbReference>
<dbReference type="Gene3D" id="2.30.30.40">
    <property type="entry name" value="SH3 Domains"/>
    <property type="match status" value="1"/>
</dbReference>
<dbReference type="InterPro" id="IPR027267">
    <property type="entry name" value="AH/BAR_dom_sf"/>
</dbReference>
<dbReference type="InterPro" id="IPR002110">
    <property type="entry name" value="Ankyrin_rpt"/>
</dbReference>
<dbReference type="InterPro" id="IPR036770">
    <property type="entry name" value="Ankyrin_rpt-contain_sf"/>
</dbReference>
<dbReference type="InterPro" id="IPR037278">
    <property type="entry name" value="ARFGAP/RecO"/>
</dbReference>
<dbReference type="InterPro" id="IPR001164">
    <property type="entry name" value="ArfGAP_dom"/>
</dbReference>
<dbReference type="InterPro" id="IPR038508">
    <property type="entry name" value="ArfGAP_dom_sf"/>
</dbReference>
<dbReference type="InterPro" id="IPR043593">
    <property type="entry name" value="ASAP"/>
</dbReference>
<dbReference type="InterPro" id="IPR037928">
    <property type="entry name" value="ASAP1_BAR"/>
</dbReference>
<dbReference type="InterPro" id="IPR038016">
    <property type="entry name" value="ASAP1_SH3"/>
</dbReference>
<dbReference type="InterPro" id="IPR004148">
    <property type="entry name" value="BAR_dom"/>
</dbReference>
<dbReference type="InterPro" id="IPR011993">
    <property type="entry name" value="PH-like_dom_sf"/>
</dbReference>
<dbReference type="InterPro" id="IPR037844">
    <property type="entry name" value="PH_ASAP"/>
</dbReference>
<dbReference type="InterPro" id="IPR001849">
    <property type="entry name" value="PH_domain"/>
</dbReference>
<dbReference type="InterPro" id="IPR036028">
    <property type="entry name" value="SH3-like_dom_sf"/>
</dbReference>
<dbReference type="InterPro" id="IPR001452">
    <property type="entry name" value="SH3_domain"/>
</dbReference>
<dbReference type="PANTHER" id="PTHR45854:SF2">
    <property type="entry name" value="ARF-GAP WITH SH3 DOMAIN, ANK REPEAT AND PH DOMAIN-CONTAINING PROTEIN 1"/>
    <property type="match status" value="1"/>
</dbReference>
<dbReference type="PANTHER" id="PTHR45854">
    <property type="entry name" value="ASAP FAMILY MEMBER"/>
    <property type="match status" value="1"/>
</dbReference>
<dbReference type="Pfam" id="PF12796">
    <property type="entry name" value="Ank_2"/>
    <property type="match status" value="1"/>
</dbReference>
<dbReference type="Pfam" id="PF01412">
    <property type="entry name" value="ArfGap"/>
    <property type="match status" value="1"/>
</dbReference>
<dbReference type="Pfam" id="PF16746">
    <property type="entry name" value="BAR_3"/>
    <property type="match status" value="1"/>
</dbReference>
<dbReference type="Pfam" id="PF00169">
    <property type="entry name" value="PH"/>
    <property type="match status" value="1"/>
</dbReference>
<dbReference type="Pfam" id="PF14604">
    <property type="entry name" value="SH3_9"/>
    <property type="match status" value="1"/>
</dbReference>
<dbReference type="PRINTS" id="PR00405">
    <property type="entry name" value="REVINTRACTNG"/>
</dbReference>
<dbReference type="SMART" id="SM00248">
    <property type="entry name" value="ANK"/>
    <property type="match status" value="2"/>
</dbReference>
<dbReference type="SMART" id="SM00105">
    <property type="entry name" value="ArfGap"/>
    <property type="match status" value="1"/>
</dbReference>
<dbReference type="SMART" id="SM00233">
    <property type="entry name" value="PH"/>
    <property type="match status" value="1"/>
</dbReference>
<dbReference type="SMART" id="SM00326">
    <property type="entry name" value="SH3"/>
    <property type="match status" value="1"/>
</dbReference>
<dbReference type="SUPFAM" id="SSF48403">
    <property type="entry name" value="Ankyrin repeat"/>
    <property type="match status" value="1"/>
</dbReference>
<dbReference type="SUPFAM" id="SSF57863">
    <property type="entry name" value="ArfGap/RecO-like zinc finger"/>
    <property type="match status" value="1"/>
</dbReference>
<dbReference type="SUPFAM" id="SSF103657">
    <property type="entry name" value="BAR/IMD domain-like"/>
    <property type="match status" value="1"/>
</dbReference>
<dbReference type="SUPFAM" id="SSF50729">
    <property type="entry name" value="PH domain-like"/>
    <property type="match status" value="1"/>
</dbReference>
<dbReference type="SUPFAM" id="SSF50044">
    <property type="entry name" value="SH3-domain"/>
    <property type="match status" value="1"/>
</dbReference>
<dbReference type="PROSITE" id="PS50297">
    <property type="entry name" value="ANK_REP_REGION"/>
    <property type="match status" value="1"/>
</dbReference>
<dbReference type="PROSITE" id="PS50088">
    <property type="entry name" value="ANK_REPEAT"/>
    <property type="match status" value="2"/>
</dbReference>
<dbReference type="PROSITE" id="PS50115">
    <property type="entry name" value="ARFGAP"/>
    <property type="match status" value="1"/>
</dbReference>
<dbReference type="PROSITE" id="PS50003">
    <property type="entry name" value="PH_DOMAIN"/>
    <property type="match status" value="1"/>
</dbReference>
<dbReference type="PROSITE" id="PS50002">
    <property type="entry name" value="SH3"/>
    <property type="match status" value="1"/>
</dbReference>
<accession>O97902</accession>
<reference key="1">
    <citation type="journal article" date="1999" name="Mol. Cell. Biol.">
        <title>DEF-1, a novel src SH3 binding protein that promotes adipogenesis in fibroblastic cell lines.</title>
        <authorList>
            <person name="King F.J."/>
            <person name="Hu E."/>
            <person name="Harris D.F."/>
            <person name="Sarraf P."/>
            <person name="Spiegelman B.M."/>
            <person name="Roberts T.M."/>
        </authorList>
    </citation>
    <scope>NUCLEOTIDE SEQUENCE [MRNA]</scope>
    <scope>CHARACTERIZATION</scope>
    <scope>PROTEIN SEQUENCE OF 80-101; 303-324; 550-558; 804-826; 839-854 AND 1039-1049</scope>
    <source>
        <tissue>Brain</tissue>
    </source>
</reference>
<reference key="2">
    <citation type="journal article" date="1998" name="Mol. Cell. Biol.">
        <title>ASAP1, a phospholipid-dependent arf GTPase-activating protein that associates with and is phosphorylated by Src.</title>
        <authorList>
            <person name="Brown M.T."/>
            <person name="Andrade J."/>
            <person name="Radhakrishna H."/>
            <person name="Donaldson J.G."/>
            <person name="Cooper J.A."/>
            <person name="Randazzo P.A."/>
        </authorList>
    </citation>
    <scope>PARTIAL NUCLEOTIDE SEQUENCE</scope>
    <scope>PROTEIN SEQUENCE OF 61-65; 130-133; 424-427 AND 502-525</scope>
    <source>
        <tissue>Brain</tissue>
    </source>
</reference>
<name>ASAP1_BOVIN</name>
<comment type="function">
    <text evidence="1 4">Possesses phosphatidylinositol 4,5-bisphosphate-dependent GTPase-activating protein activity for ARF1 (ADP ribosylation factor 1) and ARF5 and a lesser activity towards ARF6. May coordinate membrane trafficking with cell growth or actin cytoskeleton remodeling by binding to both SRC and PIP2. May function as a signal transduction protein involved in the differentiation of fibroblasts into adipocytes and possibly other cell types. Part of the ciliary targeting complex containing Rab11, ASAP1, Rabin8/RAB3IP, RAB11FIP3 and ARF4, which direct preciliary vesicle trafficking to mother centriole and ciliogenesis initiation (By similarity).</text>
</comment>
<comment type="activity regulation">
    <text evidence="1">Activity stimulated by phosphatidylinositol 4,5-bisphosphate (PIP2).</text>
</comment>
<comment type="subunit">
    <text evidence="1 4">Homodimer. Interacts with SRC and CRK. Interacts with RAB11FIP3. Interacts with PTK2B/PYK2. Interacts with CTTN. Interacts (via SH3 domain) with APC (By similarity). Interacts with REPS2; the interaction is direct (By similarity). Forms a complex containing RAB11A, ASAP1, RAB3IP, RAP11FIP3 and ARF4; the complex promotes preciliary trafficking; the complex binds to RHO in photoreceptor cells and promotes RHO ciliary transport (By similarity).</text>
</comment>
<comment type="subcellular location">
    <subcellularLocation>
        <location evidence="1">Cytoplasm</location>
    </subcellularLocation>
    <subcellularLocation>
        <location evidence="1">Membrane</location>
    </subcellularLocation>
    <subcellularLocation>
        <location evidence="4">Golgi apparatus</location>
    </subcellularLocation>
    <subcellularLocation>
        <location evidence="4">Golgi apparatus</location>
        <location evidence="4">trans-Golgi network</location>
    </subcellularLocation>
    <text evidence="1">Predominantly cytoplasmic. Partially membrane-associated.</text>
</comment>
<comment type="tissue specificity">
    <text>Ubiquitous.</text>
</comment>
<comment type="domain">
    <text evidence="1">The PH domain most probably contributes to the phosphoinositide-dependent regulation of ADP ribosylation factors.</text>
</comment>
<comment type="PTM">
    <text evidence="1">Phosphorylated on tyrosine residues by SRC.</text>
</comment>
<proteinExistence type="evidence at protein level"/>